<reference key="1">
    <citation type="submission" date="2006-01" db="EMBL/GenBank/DDBJ databases">
        <title>Complete sequence of Rhodopseudomonas palustris HaA2.</title>
        <authorList>
            <consortium name="US DOE Joint Genome Institute"/>
            <person name="Copeland A."/>
            <person name="Lucas S."/>
            <person name="Lapidus A."/>
            <person name="Barry K."/>
            <person name="Detter J.C."/>
            <person name="Glavina T."/>
            <person name="Hammon N."/>
            <person name="Israni S."/>
            <person name="Pitluck S."/>
            <person name="Chain P."/>
            <person name="Malfatti S."/>
            <person name="Shin M."/>
            <person name="Vergez L."/>
            <person name="Schmutz J."/>
            <person name="Larimer F."/>
            <person name="Land M."/>
            <person name="Hauser L."/>
            <person name="Pelletier D.A."/>
            <person name="Kyrpides N."/>
            <person name="Anderson I."/>
            <person name="Oda Y."/>
            <person name="Harwood C.S."/>
            <person name="Richardson P."/>
        </authorList>
    </citation>
    <scope>NUCLEOTIDE SEQUENCE [LARGE SCALE GENOMIC DNA]</scope>
    <source>
        <strain>HaA2</strain>
    </source>
</reference>
<organism>
    <name type="scientific">Rhodopseudomonas palustris (strain HaA2)</name>
    <dbReference type="NCBI Taxonomy" id="316058"/>
    <lineage>
        <taxon>Bacteria</taxon>
        <taxon>Pseudomonadati</taxon>
        <taxon>Pseudomonadota</taxon>
        <taxon>Alphaproteobacteria</taxon>
        <taxon>Hyphomicrobiales</taxon>
        <taxon>Nitrobacteraceae</taxon>
        <taxon>Rhodopseudomonas</taxon>
    </lineage>
</organism>
<keyword id="KW-1185">Reference proteome</keyword>
<keyword id="KW-0687">Ribonucleoprotein</keyword>
<keyword id="KW-0689">Ribosomal protein</keyword>
<dbReference type="EMBL" id="CP000250">
    <property type="protein sequence ID" value="ABD07025.1"/>
    <property type="molecule type" value="Genomic_DNA"/>
</dbReference>
<dbReference type="RefSeq" id="WP_011441210.1">
    <property type="nucleotide sequence ID" value="NC_007778.1"/>
</dbReference>
<dbReference type="SMR" id="Q2IXN5"/>
<dbReference type="STRING" id="316058.RPB_2320"/>
<dbReference type="KEGG" id="rpb:RPB_2320"/>
<dbReference type="eggNOG" id="COG0203">
    <property type="taxonomic scope" value="Bacteria"/>
</dbReference>
<dbReference type="HOGENOM" id="CLU_074407_2_0_5"/>
<dbReference type="OrthoDB" id="9809073at2"/>
<dbReference type="Proteomes" id="UP000008809">
    <property type="component" value="Chromosome"/>
</dbReference>
<dbReference type="GO" id="GO:0022625">
    <property type="term" value="C:cytosolic large ribosomal subunit"/>
    <property type="evidence" value="ECO:0007669"/>
    <property type="project" value="TreeGrafter"/>
</dbReference>
<dbReference type="GO" id="GO:0003735">
    <property type="term" value="F:structural constituent of ribosome"/>
    <property type="evidence" value="ECO:0007669"/>
    <property type="project" value="InterPro"/>
</dbReference>
<dbReference type="GO" id="GO:0006412">
    <property type="term" value="P:translation"/>
    <property type="evidence" value="ECO:0007669"/>
    <property type="project" value="UniProtKB-UniRule"/>
</dbReference>
<dbReference type="FunFam" id="3.90.1030.10:FF:000001">
    <property type="entry name" value="50S ribosomal protein L17"/>
    <property type="match status" value="1"/>
</dbReference>
<dbReference type="Gene3D" id="3.90.1030.10">
    <property type="entry name" value="Ribosomal protein L17"/>
    <property type="match status" value="1"/>
</dbReference>
<dbReference type="HAMAP" id="MF_01368">
    <property type="entry name" value="Ribosomal_bL17"/>
    <property type="match status" value="1"/>
</dbReference>
<dbReference type="InterPro" id="IPR000456">
    <property type="entry name" value="Ribosomal_bL17"/>
</dbReference>
<dbReference type="InterPro" id="IPR047859">
    <property type="entry name" value="Ribosomal_bL17_CS"/>
</dbReference>
<dbReference type="InterPro" id="IPR036373">
    <property type="entry name" value="Ribosomal_bL17_sf"/>
</dbReference>
<dbReference type="NCBIfam" id="TIGR00059">
    <property type="entry name" value="L17"/>
    <property type="match status" value="1"/>
</dbReference>
<dbReference type="PANTHER" id="PTHR14413:SF16">
    <property type="entry name" value="LARGE RIBOSOMAL SUBUNIT PROTEIN BL17M"/>
    <property type="match status" value="1"/>
</dbReference>
<dbReference type="PANTHER" id="PTHR14413">
    <property type="entry name" value="RIBOSOMAL PROTEIN L17"/>
    <property type="match status" value="1"/>
</dbReference>
<dbReference type="Pfam" id="PF01196">
    <property type="entry name" value="Ribosomal_L17"/>
    <property type="match status" value="1"/>
</dbReference>
<dbReference type="SUPFAM" id="SSF64263">
    <property type="entry name" value="Prokaryotic ribosomal protein L17"/>
    <property type="match status" value="1"/>
</dbReference>
<dbReference type="PROSITE" id="PS01167">
    <property type="entry name" value="RIBOSOMAL_L17"/>
    <property type="match status" value="1"/>
</dbReference>
<gene>
    <name evidence="1" type="primary">rplQ</name>
    <name type="ordered locus">RPB_2320</name>
</gene>
<name>RL17_RHOP2</name>
<comment type="subunit">
    <text evidence="1">Part of the 50S ribosomal subunit. Contacts protein L32.</text>
</comment>
<comment type="similarity">
    <text evidence="1">Belongs to the bacterial ribosomal protein bL17 family.</text>
</comment>
<evidence type="ECO:0000255" key="1">
    <source>
        <dbReference type="HAMAP-Rule" id="MF_01368"/>
    </source>
</evidence>
<evidence type="ECO:0000256" key="2">
    <source>
        <dbReference type="SAM" id="MobiDB-lite"/>
    </source>
</evidence>
<evidence type="ECO:0000305" key="3"/>
<proteinExistence type="inferred from homology"/>
<protein>
    <recommendedName>
        <fullName evidence="1">Large ribosomal subunit protein bL17</fullName>
    </recommendedName>
    <alternativeName>
        <fullName evidence="3">50S ribosomal protein L17</fullName>
    </alternativeName>
</protein>
<sequence length="138" mass="15503">MRHGKVHRKLNRTAEHRKAMFANMCAALIKHEQIVTTLPKAKELRPIVEKLVTLGKKGGLDKRRQAISEMRDLDQVRKLFDVLAKRYADRQGGYTRIIKAGFRYGDNAPMAVIEFVDRDEDAKGKDSGPSQDGAAEAA</sequence>
<feature type="chain" id="PRO_0000267931" description="Large ribosomal subunit protein bL17">
    <location>
        <begin position="1"/>
        <end position="138"/>
    </location>
</feature>
<feature type="region of interest" description="Disordered" evidence="2">
    <location>
        <begin position="118"/>
        <end position="138"/>
    </location>
</feature>
<accession>Q2IXN5</accession>